<dbReference type="EMBL" id="L39082">
    <property type="protein sequence ID" value="AAB00858.1"/>
    <property type="molecule type" value="mRNA"/>
</dbReference>
<dbReference type="EMBL" id="X77503">
    <property type="protein sequence ID" value="CAA54634.1"/>
    <property type="molecule type" value="mRNA"/>
</dbReference>
<dbReference type="EMBL" id="AC006532">
    <property type="protein sequence ID" value="AAD20096.1"/>
    <property type="molecule type" value="Genomic_DNA"/>
</dbReference>
<dbReference type="EMBL" id="CP002685">
    <property type="protein sequence ID" value="AEC05538.1"/>
    <property type="molecule type" value="Genomic_DNA"/>
</dbReference>
<dbReference type="EMBL" id="AF372946">
    <property type="protein sequence ID" value="AAK50086.1"/>
    <property type="molecule type" value="mRNA"/>
</dbReference>
<dbReference type="EMBL" id="AY143954">
    <property type="protein sequence ID" value="AAN28893.1"/>
    <property type="molecule type" value="mRNA"/>
</dbReference>
<dbReference type="PIR" id="C84432">
    <property type="entry name" value="C84432"/>
</dbReference>
<dbReference type="PIR" id="S46236">
    <property type="entry name" value="S46236"/>
</dbReference>
<dbReference type="RefSeq" id="NP_178313.1">
    <property type="nucleotide sequence ID" value="NM_126265.4"/>
</dbReference>
<dbReference type="SMR" id="P46032"/>
<dbReference type="BioGRID" id="138">
    <property type="interactions" value="37"/>
</dbReference>
<dbReference type="FunCoup" id="P46032">
    <property type="interactions" value="2829"/>
</dbReference>
<dbReference type="IntAct" id="P46032">
    <property type="interactions" value="17"/>
</dbReference>
<dbReference type="STRING" id="3702.P46032"/>
<dbReference type="TCDB" id="2.A.17.3.2">
    <property type="family name" value="the proton-dependent oligopeptide transporter (pot/ptr) family"/>
</dbReference>
<dbReference type="GlyGen" id="P46032">
    <property type="glycosylation" value="1 site"/>
</dbReference>
<dbReference type="iPTMnet" id="P46032"/>
<dbReference type="PaxDb" id="3702-AT2G02040.1"/>
<dbReference type="ProteomicsDB" id="226106"/>
<dbReference type="EnsemblPlants" id="AT2G02040.1">
    <property type="protein sequence ID" value="AT2G02040.1"/>
    <property type="gene ID" value="AT2G02040"/>
</dbReference>
<dbReference type="GeneID" id="814735"/>
<dbReference type="Gramene" id="AT2G02040.1">
    <property type="protein sequence ID" value="AT2G02040.1"/>
    <property type="gene ID" value="AT2G02040"/>
</dbReference>
<dbReference type="KEGG" id="ath:AT2G02040"/>
<dbReference type="Araport" id="AT2G02040"/>
<dbReference type="TAIR" id="AT2G02040">
    <property type="gene designation" value="NPF8.3"/>
</dbReference>
<dbReference type="eggNOG" id="KOG1237">
    <property type="taxonomic scope" value="Eukaryota"/>
</dbReference>
<dbReference type="HOGENOM" id="CLU_009313_4_1_1"/>
<dbReference type="InParanoid" id="P46032"/>
<dbReference type="OMA" id="WMHGAEG"/>
<dbReference type="OrthoDB" id="8904098at2759"/>
<dbReference type="PhylomeDB" id="P46032"/>
<dbReference type="SABIO-RK" id="P46032"/>
<dbReference type="PRO" id="PR:P46032"/>
<dbReference type="Proteomes" id="UP000006548">
    <property type="component" value="Chromosome 2"/>
</dbReference>
<dbReference type="ExpressionAtlas" id="P46032">
    <property type="expression patterns" value="baseline and differential"/>
</dbReference>
<dbReference type="GO" id="GO:0005794">
    <property type="term" value="C:Golgi apparatus"/>
    <property type="evidence" value="ECO:0007005"/>
    <property type="project" value="TAIR"/>
</dbReference>
<dbReference type="GO" id="GO:0000325">
    <property type="term" value="C:plant-type vacuole"/>
    <property type="evidence" value="ECO:0007005"/>
    <property type="project" value="TAIR"/>
</dbReference>
<dbReference type="GO" id="GO:0009705">
    <property type="term" value="C:plant-type vacuole membrane"/>
    <property type="evidence" value="ECO:0000314"/>
    <property type="project" value="TAIR"/>
</dbReference>
<dbReference type="GO" id="GO:0005774">
    <property type="term" value="C:vacuolar membrane"/>
    <property type="evidence" value="ECO:0007005"/>
    <property type="project" value="TAIR"/>
</dbReference>
<dbReference type="GO" id="GO:0005773">
    <property type="term" value="C:vacuole"/>
    <property type="evidence" value="ECO:0007005"/>
    <property type="project" value="TAIR"/>
</dbReference>
<dbReference type="GO" id="GO:0071916">
    <property type="term" value="F:dipeptide transmembrane transporter activity"/>
    <property type="evidence" value="ECO:0000314"/>
    <property type="project" value="TAIR"/>
</dbReference>
<dbReference type="GO" id="GO:0015334">
    <property type="term" value="F:high-affinity oligopeptide transmembrane transporter activity"/>
    <property type="evidence" value="ECO:0000314"/>
    <property type="project" value="TAIR"/>
</dbReference>
<dbReference type="GO" id="GO:0042937">
    <property type="term" value="F:tripeptide transmembrane transporter activity"/>
    <property type="evidence" value="ECO:0000314"/>
    <property type="project" value="TAIR"/>
</dbReference>
<dbReference type="GO" id="GO:0042938">
    <property type="term" value="P:dipeptide transport"/>
    <property type="evidence" value="ECO:0000314"/>
    <property type="project" value="TAIR"/>
</dbReference>
<dbReference type="GO" id="GO:0015833">
    <property type="term" value="P:peptide transport"/>
    <property type="evidence" value="ECO:0000304"/>
    <property type="project" value="TAIR"/>
</dbReference>
<dbReference type="GO" id="GO:0015031">
    <property type="term" value="P:protein transport"/>
    <property type="evidence" value="ECO:0007669"/>
    <property type="project" value="UniProtKB-KW"/>
</dbReference>
<dbReference type="GO" id="GO:0042939">
    <property type="term" value="P:tripeptide transport"/>
    <property type="evidence" value="ECO:0000314"/>
    <property type="project" value="TAIR"/>
</dbReference>
<dbReference type="CDD" id="cd17418">
    <property type="entry name" value="MFS_NPF8"/>
    <property type="match status" value="1"/>
</dbReference>
<dbReference type="Gene3D" id="1.20.1250.20">
    <property type="entry name" value="MFS general substrate transporter like domains"/>
    <property type="match status" value="1"/>
</dbReference>
<dbReference type="InterPro" id="IPR036259">
    <property type="entry name" value="MFS_trans_sf"/>
</dbReference>
<dbReference type="InterPro" id="IPR000109">
    <property type="entry name" value="POT_fam"/>
</dbReference>
<dbReference type="InterPro" id="IPR018456">
    <property type="entry name" value="PTR2_symporter_CS"/>
</dbReference>
<dbReference type="PANTHER" id="PTHR11654">
    <property type="entry name" value="OLIGOPEPTIDE TRANSPORTER-RELATED"/>
    <property type="match status" value="1"/>
</dbReference>
<dbReference type="Pfam" id="PF00854">
    <property type="entry name" value="PTR2"/>
    <property type="match status" value="1"/>
</dbReference>
<dbReference type="SUPFAM" id="SSF103473">
    <property type="entry name" value="MFS general substrate transporter"/>
    <property type="match status" value="1"/>
</dbReference>
<dbReference type="PROSITE" id="PS01022">
    <property type="entry name" value="PTR2_1"/>
    <property type="match status" value="1"/>
</dbReference>
<dbReference type="PROSITE" id="PS01023">
    <property type="entry name" value="PTR2_2"/>
    <property type="match status" value="1"/>
</dbReference>
<evidence type="ECO:0000250" key="1">
    <source>
        <dbReference type="UniProtKB" id="Q05085"/>
    </source>
</evidence>
<evidence type="ECO:0000255" key="2"/>
<evidence type="ECO:0000269" key="3">
    <source>
    </source>
</evidence>
<evidence type="ECO:0000269" key="4">
    <source>
    </source>
</evidence>
<evidence type="ECO:0000269" key="5">
    <source>
    </source>
</evidence>
<evidence type="ECO:0000305" key="6"/>
<evidence type="ECO:0007744" key="7">
    <source>
    </source>
</evidence>
<comment type="function">
    <text>Peptide transporter. Mediates the transport of di- and tripeptides. High affinity, low capacity transporter. Can also transport histidine.</text>
</comment>
<comment type="activity regulation">
    <text evidence="5">Inhibited by leucyl-ethionine.</text>
</comment>
<comment type="biophysicochemical properties">
    <kinetics>
        <KM evidence="5">14.4 uM for dileucine</KM>
    </kinetics>
</comment>
<comment type="subcellular location">
    <subcellularLocation>
        <location evidence="3">Vacuole membrane</location>
        <topology evidence="2">Multi-pass membrane protein</topology>
    </subcellularLocation>
</comment>
<comment type="tissue specificity">
    <text evidence="4 5">Highly expressed in young leaves, roots and germinating seeds, intermediately in stems, flowers and mature leaves and at low level in siliques.</text>
</comment>
<comment type="similarity">
    <text evidence="6">Belongs to the major facilitator superfamily. Proton-dependent oligopeptide transporter (POT/PTR) (TC 2.A.17) family.</text>
</comment>
<keyword id="KW-0007">Acetylation</keyword>
<keyword id="KW-0472">Membrane</keyword>
<keyword id="KW-0571">Peptide transport</keyword>
<keyword id="KW-0597">Phosphoprotein</keyword>
<keyword id="KW-0653">Protein transport</keyword>
<keyword id="KW-1185">Reference proteome</keyword>
<keyword id="KW-0812">Transmembrane</keyword>
<keyword id="KW-1133">Transmembrane helix</keyword>
<keyword id="KW-0813">Transport</keyword>
<keyword id="KW-0926">Vacuole</keyword>
<protein>
    <recommendedName>
        <fullName>Protein NRT1/ PTR FAMILY 8.3</fullName>
        <shortName>AtNPF8.3</shortName>
    </recommendedName>
    <alternativeName>
        <fullName>Histidine-transporting protein</fullName>
    </alternativeName>
    <alternativeName>
        <fullName>Peptide transporter PTR2</fullName>
    </alternativeName>
</protein>
<reference key="1">
    <citation type="journal article" date="1996" name="Plant Physiol.">
        <title>Cloning of a second Arabidopsis peptide transport gene.</title>
        <authorList>
            <person name="Song W."/>
            <person name="Steiner H.-Y."/>
            <person name="Zhang L."/>
            <person name="Naider F."/>
            <person name="Stacey G."/>
            <person name="Becker J.M."/>
        </authorList>
    </citation>
    <scope>NUCLEOTIDE SEQUENCE [MRNA]</scope>
    <scope>BIOPHYSICOCHEMICAL PROPERTIES</scope>
    <scope>ACTIVITY REGULATION</scope>
    <scope>TISSUE SPECIFICITY</scope>
    <source>
        <strain>cv. Landsberg erecta</strain>
    </source>
</reference>
<reference key="2">
    <citation type="journal article" date="1994" name="FEBS Lett.">
        <title>Cloning of an Arabidopsis histidine transporting protein related to nitrate and peptide transporters.</title>
        <authorList>
            <person name="Frommer W.B."/>
            <person name="Hummel S."/>
            <person name="Rentsch D."/>
        </authorList>
    </citation>
    <scope>NUCLEOTIDE SEQUENCE [MRNA]</scope>
    <source>
        <strain>cv. C24</strain>
    </source>
</reference>
<reference key="3">
    <citation type="journal article" date="1999" name="Nature">
        <title>Sequence and analysis of chromosome 2 of the plant Arabidopsis thaliana.</title>
        <authorList>
            <person name="Lin X."/>
            <person name="Kaul S."/>
            <person name="Rounsley S.D."/>
            <person name="Shea T.P."/>
            <person name="Benito M.-I."/>
            <person name="Town C.D."/>
            <person name="Fujii C.Y."/>
            <person name="Mason T.M."/>
            <person name="Bowman C.L."/>
            <person name="Barnstead M.E."/>
            <person name="Feldblyum T.V."/>
            <person name="Buell C.R."/>
            <person name="Ketchum K.A."/>
            <person name="Lee J.J."/>
            <person name="Ronning C.M."/>
            <person name="Koo H.L."/>
            <person name="Moffat K.S."/>
            <person name="Cronin L.A."/>
            <person name="Shen M."/>
            <person name="Pai G."/>
            <person name="Van Aken S."/>
            <person name="Umayam L."/>
            <person name="Tallon L.J."/>
            <person name="Gill J.E."/>
            <person name="Adams M.D."/>
            <person name="Carrera A.J."/>
            <person name="Creasy T.H."/>
            <person name="Goodman H.M."/>
            <person name="Somerville C.R."/>
            <person name="Copenhaver G.P."/>
            <person name="Preuss D."/>
            <person name="Nierman W.C."/>
            <person name="White O."/>
            <person name="Eisen J.A."/>
            <person name="Salzberg S.L."/>
            <person name="Fraser C.M."/>
            <person name="Venter J.C."/>
        </authorList>
    </citation>
    <scope>NUCLEOTIDE SEQUENCE [LARGE SCALE GENOMIC DNA]</scope>
    <source>
        <strain>cv. Columbia</strain>
    </source>
</reference>
<reference key="4">
    <citation type="journal article" date="2017" name="Plant J.">
        <title>Araport11: a complete reannotation of the Arabidopsis thaliana reference genome.</title>
        <authorList>
            <person name="Cheng C.Y."/>
            <person name="Krishnakumar V."/>
            <person name="Chan A.P."/>
            <person name="Thibaud-Nissen F."/>
            <person name="Schobel S."/>
            <person name="Town C.D."/>
        </authorList>
    </citation>
    <scope>GENOME REANNOTATION</scope>
    <source>
        <strain>cv. Columbia</strain>
    </source>
</reference>
<reference key="5">
    <citation type="journal article" date="2003" name="Science">
        <title>Empirical analysis of transcriptional activity in the Arabidopsis genome.</title>
        <authorList>
            <person name="Yamada K."/>
            <person name="Lim J."/>
            <person name="Dale J.M."/>
            <person name="Chen H."/>
            <person name="Shinn P."/>
            <person name="Palm C.J."/>
            <person name="Southwick A.M."/>
            <person name="Wu H.C."/>
            <person name="Kim C.J."/>
            <person name="Nguyen M."/>
            <person name="Pham P.K."/>
            <person name="Cheuk R.F."/>
            <person name="Karlin-Newmann G."/>
            <person name="Liu S.X."/>
            <person name="Lam B."/>
            <person name="Sakano H."/>
            <person name="Wu T."/>
            <person name="Yu G."/>
            <person name="Miranda M."/>
            <person name="Quach H.L."/>
            <person name="Tripp M."/>
            <person name="Chang C.H."/>
            <person name="Lee J.M."/>
            <person name="Toriumi M.J."/>
            <person name="Chan M.M."/>
            <person name="Tang C.C."/>
            <person name="Onodera C.S."/>
            <person name="Deng J.M."/>
            <person name="Akiyama K."/>
            <person name="Ansari Y."/>
            <person name="Arakawa T."/>
            <person name="Banh J."/>
            <person name="Banno F."/>
            <person name="Bowser L."/>
            <person name="Brooks S.Y."/>
            <person name="Carninci P."/>
            <person name="Chao Q."/>
            <person name="Choy N."/>
            <person name="Enju A."/>
            <person name="Goldsmith A.D."/>
            <person name="Gurjal M."/>
            <person name="Hansen N.F."/>
            <person name="Hayashizaki Y."/>
            <person name="Johnson-Hopson C."/>
            <person name="Hsuan V.W."/>
            <person name="Iida K."/>
            <person name="Karnes M."/>
            <person name="Khan S."/>
            <person name="Koesema E."/>
            <person name="Ishida J."/>
            <person name="Jiang P.X."/>
            <person name="Jones T."/>
            <person name="Kawai J."/>
            <person name="Kamiya A."/>
            <person name="Meyers C."/>
            <person name="Nakajima M."/>
            <person name="Narusaka M."/>
            <person name="Seki M."/>
            <person name="Sakurai T."/>
            <person name="Satou M."/>
            <person name="Tamse R."/>
            <person name="Vaysberg M."/>
            <person name="Wallender E.K."/>
            <person name="Wong C."/>
            <person name="Yamamura Y."/>
            <person name="Yuan S."/>
            <person name="Shinozaki K."/>
            <person name="Davis R.W."/>
            <person name="Theologis A."/>
            <person name="Ecker J.R."/>
        </authorList>
    </citation>
    <scope>NUCLEOTIDE SEQUENCE [LARGE SCALE MRNA]</scope>
    <source>
        <strain>cv. Columbia</strain>
    </source>
</reference>
<reference key="6">
    <citation type="journal article" date="2007" name="FEBS Lett.">
        <title>Nitrate transporters and peptide transporters.</title>
        <authorList>
            <person name="Tsay Y.F."/>
            <person name="Chiu C.C."/>
            <person name="Tsai C.B."/>
            <person name="Ho C.H."/>
            <person name="Hsu P.K."/>
        </authorList>
    </citation>
    <scope>TISSUE SPECIFICITY</scope>
    <scope>GENE FAMILY</scope>
</reference>
<reference key="7">
    <citation type="journal article" date="2007" name="Mol. Cell. Proteomics">
        <title>A proteomics dissection of Arabidopsis thaliana vacuoles isolated from cell culture.</title>
        <authorList>
            <person name="Jaquinod M."/>
            <person name="Villiers F."/>
            <person name="Kieffer-Jaquinod S."/>
            <person name="Hugouvieux V."/>
            <person name="Bruley C."/>
            <person name="Garin J."/>
            <person name="Bourguignon J."/>
        </authorList>
    </citation>
    <scope>IDENTIFICATION BY MASS SPECTROMETRY</scope>
    <scope>SUBCELLULAR LOCATION [LARGE SCALE ANALYSIS]</scope>
</reference>
<reference key="8">
    <citation type="journal article" date="2012" name="Mol. Cell. Proteomics">
        <title>Comparative large-scale characterisation of plant vs. mammal proteins reveals similar and idiosyncratic N-alpha acetylation features.</title>
        <authorList>
            <person name="Bienvenut W.V."/>
            <person name="Sumpton D."/>
            <person name="Martinez A."/>
            <person name="Lilla S."/>
            <person name="Espagne C."/>
            <person name="Meinnel T."/>
            <person name="Giglione C."/>
        </authorList>
    </citation>
    <scope>ACETYLATION [LARGE SCALE ANALYSIS] AT GLY-2</scope>
    <scope>CLEAVAGE OF INITIATOR METHIONINE [LARGE SCALE ANALYSIS]</scope>
    <scope>IDENTIFICATION BY MASS SPECTROMETRY [LARGE SCALE ANALYSIS]</scope>
</reference>
<reference key="9">
    <citation type="journal article" date="2014" name="Trends Plant Sci.">
        <title>A unified nomenclature of NITRATE TRANSPORTER 1/PEPTIDE TRANSPORTER family members in plants.</title>
        <authorList>
            <person name="Leran S."/>
            <person name="Varala K."/>
            <person name="Boyer J.C."/>
            <person name="Chiurazzi M."/>
            <person name="Crawford N."/>
            <person name="Daniel-Vedele F."/>
            <person name="David L."/>
            <person name="Dickstein R."/>
            <person name="Fernandez E."/>
            <person name="Forde B."/>
            <person name="Gassmann W."/>
            <person name="Geiger D."/>
            <person name="Gojon A."/>
            <person name="Gong J.M."/>
            <person name="Halkier B.A."/>
            <person name="Harris J.M."/>
            <person name="Hedrich R."/>
            <person name="Limami A.M."/>
            <person name="Rentsch D."/>
            <person name="Seo M."/>
            <person name="Tsay Y.F."/>
            <person name="Zhang M."/>
            <person name="Coruzzi G."/>
            <person name="Lacombe B."/>
        </authorList>
    </citation>
    <scope>GENE FAMILY</scope>
    <scope>NOMENCLATURE</scope>
</reference>
<proteinExistence type="evidence at protein level"/>
<accession>P46032</accession>
<name>PTR2_ARATH</name>
<organism>
    <name type="scientific">Arabidopsis thaliana</name>
    <name type="common">Mouse-ear cress</name>
    <dbReference type="NCBI Taxonomy" id="3702"/>
    <lineage>
        <taxon>Eukaryota</taxon>
        <taxon>Viridiplantae</taxon>
        <taxon>Streptophyta</taxon>
        <taxon>Embryophyta</taxon>
        <taxon>Tracheophyta</taxon>
        <taxon>Spermatophyta</taxon>
        <taxon>Magnoliopsida</taxon>
        <taxon>eudicotyledons</taxon>
        <taxon>Gunneridae</taxon>
        <taxon>Pentapetalae</taxon>
        <taxon>rosids</taxon>
        <taxon>malvids</taxon>
        <taxon>Brassicales</taxon>
        <taxon>Brassicaceae</taxon>
        <taxon>Camelineae</taxon>
        <taxon>Arabidopsis</taxon>
    </lineage>
</organism>
<sequence length="585" mass="64421">MGSIEEEARPLIEEGLILQEVKLYAEDGSVDFNGNPPLKEKTGNWKACPFILGNECCERLAYYGIAGNLITYLTTKLHQGNVSAATNVTTWQGTCYLTPLIGAVLADAYWGRYWTIACFSGIYFIGMSALTLSASVPALKPAECIGDFCPSATPAQYAMFFGGLYLIALGTGGIKPCVSSFGADQFDDTDSRERVRKASFFNWFYFSINIGALVSSSLLVWIQENRGWGLGFGIPTVFMGLAIASFFFGTPLYRFQKPGGSPITRISQVVVASFRKSSVKVPEDATLLYETQDKNSAIAGSRKIEHTDDCQYLDKAAVISEEESKSGDYSNSWRLCTVTQVEELKILIRMFPIWASGIIFSAVYAQMSTMFVQQGRAMNCKIGSFQLPPAALGTFDTASVIIWVPLYDRFIVPLARKFTGVDKGFTEIQRMGIGLFVSVLCMAAAAIVEIIRLHMANDLGLVESGAPVPISVLWQIPQYFILGAAEVFYFIGQLEFFYDQSPDAMRSLCSALALLTNALGNYLSSLILTLVTYFTTRNGQEGWISDNLNSGHLDYFFWLLAGLSLVNMAVYFFSAARYKQKKASS</sequence>
<gene>
    <name type="primary">NPF8.3</name>
    <name type="synonym">NTR1</name>
    <name type="synonym">PTR2</name>
    <name type="synonym">PTR2-B</name>
    <name type="ordered locus">At2g02040</name>
    <name type="ORF">F14H20.11</name>
</gene>
<feature type="initiator methionine" description="Removed" evidence="7">
    <location>
        <position position="1"/>
    </location>
</feature>
<feature type="chain" id="PRO_0000064320" description="Protein NRT1/ PTR FAMILY 8.3">
    <location>
        <begin position="2"/>
        <end position="585"/>
    </location>
</feature>
<feature type="transmembrane region" description="Helical" evidence="2">
    <location>
        <begin position="91"/>
        <end position="111"/>
    </location>
</feature>
<feature type="transmembrane region" description="Helical" evidence="2">
    <location>
        <begin position="116"/>
        <end position="136"/>
    </location>
</feature>
<feature type="transmembrane region" description="Helical" evidence="2">
    <location>
        <begin position="154"/>
        <end position="174"/>
    </location>
</feature>
<feature type="transmembrane region" description="Helical" evidence="2">
    <location>
        <begin position="200"/>
        <end position="220"/>
    </location>
</feature>
<feature type="transmembrane region" description="Helical" evidence="2">
    <location>
        <begin position="228"/>
        <end position="248"/>
    </location>
</feature>
<feature type="transmembrane region" description="Helical" evidence="2">
    <location>
        <begin position="351"/>
        <end position="371"/>
    </location>
</feature>
<feature type="transmembrane region" description="Helical" evidence="2">
    <location>
        <begin position="387"/>
        <end position="407"/>
    </location>
</feature>
<feature type="transmembrane region" description="Helical" evidence="2">
    <location>
        <begin position="431"/>
        <end position="451"/>
    </location>
</feature>
<feature type="transmembrane region" description="Helical" evidence="2">
    <location>
        <begin position="472"/>
        <end position="492"/>
    </location>
</feature>
<feature type="transmembrane region" description="Helical" evidence="2">
    <location>
        <begin position="511"/>
        <end position="531"/>
    </location>
</feature>
<feature type="transmembrane region" description="Helical" evidence="2">
    <location>
        <begin position="556"/>
        <end position="576"/>
    </location>
</feature>
<feature type="modified residue" description="N-acetylglycine" evidence="7">
    <location>
        <position position="2"/>
    </location>
</feature>
<feature type="modified residue" description="Phosphothreonine" evidence="1">
    <location>
        <position position="115"/>
    </location>
</feature>
<feature type="sequence conflict" description="In Ref. 2; CAA54634." evidence="6" ref="2">
    <original>R</original>
    <variation>ED</variation>
    <location>
        <position position="334"/>
    </location>
</feature>